<proteinExistence type="inferred from homology"/>
<evidence type="ECO:0000255" key="1">
    <source>
        <dbReference type="HAMAP-Rule" id="MF_00195"/>
    </source>
</evidence>
<evidence type="ECO:0000256" key="2">
    <source>
        <dbReference type="SAM" id="MobiDB-lite"/>
    </source>
</evidence>
<organism>
    <name type="scientific">Nitratidesulfovibrio vulgaris (strain ATCC 29579 / DSM 644 / CCUG 34227 / NCIMB 8303 / VKM B-1760 / Hildenborough)</name>
    <name type="common">Desulfovibrio vulgaris</name>
    <dbReference type="NCBI Taxonomy" id="882"/>
    <lineage>
        <taxon>Bacteria</taxon>
        <taxon>Pseudomonadati</taxon>
        <taxon>Thermodesulfobacteriota</taxon>
        <taxon>Desulfovibrionia</taxon>
        <taxon>Desulfovibrionales</taxon>
        <taxon>Desulfovibrionaceae</taxon>
        <taxon>Nitratidesulfovibrio</taxon>
    </lineage>
</organism>
<protein>
    <recommendedName>
        <fullName evidence="1">GTPase Der</fullName>
    </recommendedName>
    <alternativeName>
        <fullName evidence="1">GTP-binding protein EngA</fullName>
    </alternativeName>
</protein>
<accession>Q725L9</accession>
<reference key="1">
    <citation type="journal article" date="2004" name="Nat. Biotechnol.">
        <title>The genome sequence of the anaerobic, sulfate-reducing bacterium Desulfovibrio vulgaris Hildenborough.</title>
        <authorList>
            <person name="Heidelberg J.F."/>
            <person name="Seshadri R."/>
            <person name="Haveman S.A."/>
            <person name="Hemme C.L."/>
            <person name="Paulsen I.T."/>
            <person name="Kolonay J.F."/>
            <person name="Eisen J.A."/>
            <person name="Ward N.L."/>
            <person name="Methe B.A."/>
            <person name="Brinkac L.M."/>
            <person name="Daugherty S.C."/>
            <person name="DeBoy R.T."/>
            <person name="Dodson R.J."/>
            <person name="Durkin A.S."/>
            <person name="Madupu R."/>
            <person name="Nelson W.C."/>
            <person name="Sullivan S.A."/>
            <person name="Fouts D.E."/>
            <person name="Haft D.H."/>
            <person name="Selengut J."/>
            <person name="Peterson J.D."/>
            <person name="Davidsen T.M."/>
            <person name="Zafar N."/>
            <person name="Zhou L."/>
            <person name="Radune D."/>
            <person name="Dimitrov G."/>
            <person name="Hance M."/>
            <person name="Tran K."/>
            <person name="Khouri H.M."/>
            <person name="Gill J."/>
            <person name="Utterback T.R."/>
            <person name="Feldblyum T.V."/>
            <person name="Wall J.D."/>
            <person name="Voordouw G."/>
            <person name="Fraser C.M."/>
        </authorList>
    </citation>
    <scope>NUCLEOTIDE SEQUENCE [LARGE SCALE GENOMIC DNA]</scope>
    <source>
        <strain>ATCC 29579 / DSM 644 / CCUG 34227 / NCIMB 8303 / VKM B-1760 / Hildenborough</strain>
    </source>
</reference>
<dbReference type="EMBL" id="AE017285">
    <property type="protein sequence ID" value="AAS97664.1"/>
    <property type="molecule type" value="Genomic_DNA"/>
</dbReference>
<dbReference type="RefSeq" id="WP_010940452.1">
    <property type="nucleotide sequence ID" value="NC_002937.3"/>
</dbReference>
<dbReference type="RefSeq" id="YP_012404.1">
    <property type="nucleotide sequence ID" value="NC_002937.3"/>
</dbReference>
<dbReference type="SMR" id="Q725L9"/>
<dbReference type="STRING" id="882.DVU_3194"/>
<dbReference type="PaxDb" id="882-DVU_3194"/>
<dbReference type="EnsemblBacteria" id="AAS97664">
    <property type="protein sequence ID" value="AAS97664"/>
    <property type="gene ID" value="DVU_3194"/>
</dbReference>
<dbReference type="KEGG" id="dvu:DVU_3194"/>
<dbReference type="PATRIC" id="fig|882.5.peg.2900"/>
<dbReference type="eggNOG" id="COG1160">
    <property type="taxonomic scope" value="Bacteria"/>
</dbReference>
<dbReference type="HOGENOM" id="CLU_016077_6_2_7"/>
<dbReference type="OrthoDB" id="9805918at2"/>
<dbReference type="PhylomeDB" id="Q725L9"/>
<dbReference type="Proteomes" id="UP000002194">
    <property type="component" value="Chromosome"/>
</dbReference>
<dbReference type="GO" id="GO:0005525">
    <property type="term" value="F:GTP binding"/>
    <property type="evidence" value="ECO:0007669"/>
    <property type="project" value="UniProtKB-UniRule"/>
</dbReference>
<dbReference type="GO" id="GO:0043022">
    <property type="term" value="F:ribosome binding"/>
    <property type="evidence" value="ECO:0007669"/>
    <property type="project" value="TreeGrafter"/>
</dbReference>
<dbReference type="GO" id="GO:0042254">
    <property type="term" value="P:ribosome biogenesis"/>
    <property type="evidence" value="ECO:0007669"/>
    <property type="project" value="UniProtKB-KW"/>
</dbReference>
<dbReference type="CDD" id="cd01894">
    <property type="entry name" value="EngA1"/>
    <property type="match status" value="1"/>
</dbReference>
<dbReference type="CDD" id="cd01895">
    <property type="entry name" value="EngA2"/>
    <property type="match status" value="1"/>
</dbReference>
<dbReference type="FunFam" id="3.30.300.20:FF:000004">
    <property type="entry name" value="GTPase Der"/>
    <property type="match status" value="1"/>
</dbReference>
<dbReference type="FunFam" id="3.40.50.300:FF:000494">
    <property type="entry name" value="tRNA modification GTPase MnmE"/>
    <property type="match status" value="1"/>
</dbReference>
<dbReference type="Gene3D" id="3.30.300.20">
    <property type="match status" value="1"/>
</dbReference>
<dbReference type="Gene3D" id="3.40.50.300">
    <property type="entry name" value="P-loop containing nucleotide triphosphate hydrolases"/>
    <property type="match status" value="2"/>
</dbReference>
<dbReference type="HAMAP" id="MF_00195">
    <property type="entry name" value="GTPase_Der"/>
    <property type="match status" value="1"/>
</dbReference>
<dbReference type="InterPro" id="IPR031166">
    <property type="entry name" value="G_ENGA"/>
</dbReference>
<dbReference type="InterPro" id="IPR006073">
    <property type="entry name" value="GTP-bd"/>
</dbReference>
<dbReference type="InterPro" id="IPR016484">
    <property type="entry name" value="GTPase_Der"/>
</dbReference>
<dbReference type="InterPro" id="IPR032859">
    <property type="entry name" value="KH_dom-like"/>
</dbReference>
<dbReference type="InterPro" id="IPR015946">
    <property type="entry name" value="KH_dom-like_a/b"/>
</dbReference>
<dbReference type="InterPro" id="IPR027417">
    <property type="entry name" value="P-loop_NTPase"/>
</dbReference>
<dbReference type="InterPro" id="IPR005225">
    <property type="entry name" value="Small_GTP-bd"/>
</dbReference>
<dbReference type="NCBIfam" id="TIGR03594">
    <property type="entry name" value="GTPase_EngA"/>
    <property type="match status" value="1"/>
</dbReference>
<dbReference type="NCBIfam" id="TIGR00231">
    <property type="entry name" value="small_GTP"/>
    <property type="match status" value="2"/>
</dbReference>
<dbReference type="PANTHER" id="PTHR43834">
    <property type="entry name" value="GTPASE DER"/>
    <property type="match status" value="1"/>
</dbReference>
<dbReference type="PANTHER" id="PTHR43834:SF6">
    <property type="entry name" value="GTPASE DER"/>
    <property type="match status" value="1"/>
</dbReference>
<dbReference type="Pfam" id="PF14714">
    <property type="entry name" value="KH_dom-like"/>
    <property type="match status" value="1"/>
</dbReference>
<dbReference type="Pfam" id="PF01926">
    <property type="entry name" value="MMR_HSR1"/>
    <property type="match status" value="2"/>
</dbReference>
<dbReference type="PIRSF" id="PIRSF006485">
    <property type="entry name" value="GTP-binding_EngA"/>
    <property type="match status" value="1"/>
</dbReference>
<dbReference type="SUPFAM" id="SSF52540">
    <property type="entry name" value="P-loop containing nucleoside triphosphate hydrolases"/>
    <property type="match status" value="2"/>
</dbReference>
<dbReference type="PROSITE" id="PS51712">
    <property type="entry name" value="G_ENGA"/>
    <property type="match status" value="2"/>
</dbReference>
<gene>
    <name evidence="1" type="primary">der</name>
    <name type="synonym">engA</name>
    <name type="ordered locus">DVU_3194</name>
</gene>
<name>DER_NITV2</name>
<keyword id="KW-0342">GTP-binding</keyword>
<keyword id="KW-0547">Nucleotide-binding</keyword>
<keyword id="KW-1185">Reference proteome</keyword>
<keyword id="KW-0677">Repeat</keyword>
<keyword id="KW-0690">Ribosome biogenesis</keyword>
<feature type="chain" id="PRO_1000011617" description="GTPase Der">
    <location>
        <begin position="1"/>
        <end position="491"/>
    </location>
</feature>
<feature type="domain" description="EngA-type G 1">
    <location>
        <begin position="3"/>
        <end position="178"/>
    </location>
</feature>
<feature type="domain" description="EngA-type G 2">
    <location>
        <begin position="227"/>
        <end position="400"/>
    </location>
</feature>
<feature type="domain" description="KH-like" evidence="1">
    <location>
        <begin position="401"/>
        <end position="485"/>
    </location>
</feature>
<feature type="region of interest" description="Disordered" evidence="2">
    <location>
        <begin position="198"/>
        <end position="225"/>
    </location>
</feature>
<feature type="compositionally biased region" description="Acidic residues" evidence="2">
    <location>
        <begin position="198"/>
        <end position="224"/>
    </location>
</feature>
<feature type="binding site" evidence="1">
    <location>
        <begin position="9"/>
        <end position="16"/>
    </location>
    <ligand>
        <name>GTP</name>
        <dbReference type="ChEBI" id="CHEBI:37565"/>
        <label>1</label>
    </ligand>
</feature>
<feature type="binding site" evidence="1">
    <location>
        <begin position="57"/>
        <end position="61"/>
    </location>
    <ligand>
        <name>GTP</name>
        <dbReference type="ChEBI" id="CHEBI:37565"/>
        <label>1</label>
    </ligand>
</feature>
<feature type="binding site" evidence="1">
    <location>
        <begin position="130"/>
        <end position="133"/>
    </location>
    <ligand>
        <name>GTP</name>
        <dbReference type="ChEBI" id="CHEBI:37565"/>
        <label>1</label>
    </ligand>
</feature>
<feature type="binding site" evidence="1">
    <location>
        <begin position="233"/>
        <end position="240"/>
    </location>
    <ligand>
        <name>GTP</name>
        <dbReference type="ChEBI" id="CHEBI:37565"/>
        <label>2</label>
    </ligand>
</feature>
<feature type="binding site" evidence="1">
    <location>
        <begin position="280"/>
        <end position="284"/>
    </location>
    <ligand>
        <name>GTP</name>
        <dbReference type="ChEBI" id="CHEBI:37565"/>
        <label>2</label>
    </ligand>
</feature>
<feature type="binding site" evidence="1">
    <location>
        <begin position="345"/>
        <end position="348"/>
    </location>
    <ligand>
        <name>GTP</name>
        <dbReference type="ChEBI" id="CHEBI:37565"/>
        <label>2</label>
    </ligand>
</feature>
<sequence>MFAKIALVGRPNVGKSTLFNRLIRSNRAITHDMPGVTRDRMEGIVRGRNKRPFGIIDTGGITLDGHAAVAEGPAGIRGFEAEILRQAEEAIAECVAVCLVVDGREGLLPFDEHLASYLRRTGKPVLVVVNKVDGIEKEDVLTAEFHILGFPVLAVSAEHGHNLRWLESEMRDLLPEEDEDGIDDDAADATAVAIADADAETEDGASASETEEDITEETVEDEPEAPLRLCMLGRPNAGKSSLVNALTGTNRMIVSDVAGTTRDSVDVAFEKDGLSYTFVDTAGVRRRSRITDTVERYSVNSSLKSTTKAHVTLLVLDAVEGITSQDKRLIELLDERKTPFMVLVNKMDLVPAKAREDGKRNFRDLLNFCQHVPLLFVSAKTGYELRSIVPLAARIRRECSVRIPTGQLNRAMEEVITRHQPPVVRRVRPKFYYMTQAESQPPTFVLFVNDADRIQAPYAKYIEKSLRRLFGIEHAPMRVHFRSSHKKNSEK</sequence>
<comment type="function">
    <text evidence="1">GTPase that plays an essential role in the late steps of ribosome biogenesis.</text>
</comment>
<comment type="subunit">
    <text evidence="1">Associates with the 50S ribosomal subunit.</text>
</comment>
<comment type="similarity">
    <text evidence="1">Belongs to the TRAFAC class TrmE-Era-EngA-EngB-Septin-like GTPase superfamily. EngA (Der) GTPase family.</text>
</comment>